<comment type="function">
    <text evidence="5">Non-reducing polyketide synthase; part of the gene cluster that mediates the biosynthesis of agnestins, dihydroxy-xanthone metabolites (PubMed:30746079). The pathway begins with the assembly and cyclization of atrochrysone thioester by the non-reducing polyketide synthase Agnpks1 (PubMed:30746079). The atrochrysone carboxyl ACP thioesterase AgnL7 then breaks the thioester bond and releases the atrochrysone carboxylic acid as the first enzyme-free intermediate (PubMed:30746079). The decarboxylase AgnL1 then catalyzes the concerted decarboxylation-elimination required to convert atochrysone carboxylic acid into emodin anthrone, which is further oxidized to emodin by the anthrone oxygenase AgnL2 (PubMed:30746079). Emodin then undergoes reduction catalyzed by the oxidoreductase AgnL4 to yield the dihydroquinone tautomer which is the substrate for reduction by the short chain dehydrogenase AgnL6 reduction to produce hydroxyketone, followed by AgnL8 dehydration and likely spontaneous autoxidation to chrysophanol (PubMed:30746079). Baeyer-Villiger oxidation by the oxidase AgnL3 leads to monodictyphenone via cleavage of the C-10/C-10a bond of chrysophanol (PubMed:30746079). Alternative cleavage at the C-4a/C-10 bond of chrysophanol also leads to the formation some cephalone F (PubMed:30746079). Further conversion to agnestins A and B, requires reduction to dihydro-monodictyphenone, oxidation to agnestin C probably via an epoxide, and rearrangement to either agnestin A or agnestin B directly, although agnestin A or agnestin B can also interconvert (PubMed:30746079). Within the cluster, AgnR1 is the only unassigned oxidoreductase present which could be involved in this conversion. However, AgnR1 seems not to be involved in this step, and thus genes involved in the proposed oxidation/reduction may be located elsewhere on the genome (PubMed:30746079). Further agnestin A derivatives are probably formed by spontaneous decarboxylations, dehydrations and methanolysis reactions (PubMed:30746079).</text>
</comment>
<comment type="catalytic activity">
    <reaction evidence="7">
        <text>holo-[ACP] + 8 malonyl-CoA + 8 H(+) = atrochrysone carboxyl-[ACP] + 8 CO2 + 8 CoA + 2 H2O</text>
        <dbReference type="Rhea" id="RHEA:64232"/>
        <dbReference type="Rhea" id="RHEA-COMP:9685"/>
        <dbReference type="Rhea" id="RHEA-COMP:16552"/>
        <dbReference type="ChEBI" id="CHEBI:15377"/>
        <dbReference type="ChEBI" id="CHEBI:15378"/>
        <dbReference type="ChEBI" id="CHEBI:16526"/>
        <dbReference type="ChEBI" id="CHEBI:57287"/>
        <dbReference type="ChEBI" id="CHEBI:57384"/>
        <dbReference type="ChEBI" id="CHEBI:64479"/>
        <dbReference type="ChEBI" id="CHEBI:149712"/>
    </reaction>
    <physiologicalReaction direction="left-to-right" evidence="7">
        <dbReference type="Rhea" id="RHEA:64233"/>
    </physiologicalReaction>
</comment>
<comment type="pathway">
    <text evidence="5">Secondary metabolite biosynthesis.</text>
</comment>
<comment type="domain">
    <text evidence="7">Multidomain protein; including a starter unit:ACP transacylase (SAT) that selects the starter unit; a ketosynthase (KS) that catalyzes repeated decarboxylative condensation to elongate the polyketide backbone; a malonyl-CoA:ACP transacylase (MAT) that selects and transfers the extender unit malonyl-CoA; a product template (PT) domain that controls the immediate cyclization regioselectivity of the reactive polyketide backbone; and an acyl-carrier protein (ACP) that serves as the tether of the growing and completed polyketide via its phosphopantetheinyl arm.</text>
</comment>
<comment type="disruption phenotype">
    <text evidence="5">Leads to complete loss of monodictyphenone, agnestins and all related compounds.</text>
</comment>
<sequence>MRYCTIPPVHSPIIRLQHGILSKMKLIYFSNEFPPDDLHTLFRELHNHSKDRRHPILARFLEEATLAVREEVRRLPAHLRALIPPFESIWNFADFADLRKGQLCGSIDGILLCSVELGTLIRYYENNPDAFNLETGGTILAGLGIGLLATAAVSLASTVADLPITGAQVIRQAFRLGILVDEVSQNLQPRDATDTSTPDSWAYVLPNVSASEVQQELDTMQGIVKTPEASKIFISALSATAVTISGPPARLQAMFRTSQFFHDHKSVALPVYGGLCHAKHIYTVEDVHHIVRTSSMALLDSKFSPQLPIHSTSTGAPFPAVNATELFEHIIGEILMRAIQWDKVIQGVAQLAQDVGATRCEIVVFRNSLPIHDLAAALKTIPGLETSTQEIIPWVHSKPPAGEGGPRGPLQSKIAIVGMSCRMPGGATDTEKFWELLESGLDVHRKIPADRFDVDSHYDPAGKRLNASHTPYGCFIDEPGLFDAPFFNMSPREAQQTDPMQRLALVTAYEALERAGYVANRTAATDLHRIGTFYGQASDDYREVNSAQEISTYFIPGGCRAFGPGRINYFFKFSGPSYSIDTACSSSLATIQTACAALWNGDVDTAVAGGTNVLTNSDAFAGLSHGHFLSKTPNACKTWDCNADGYCRADAVGSIVMKRLEDAEADNDNILGVILAAATNHSAEAISITHPHAGHQAYLGKLVANRAGIDPLDVGFVEMHGTGTQAGDAEEIQSVTNAYAPTTRRRTAKNPLYIGAVKSNVGHSEAAAGVTAMLKVLLMFQKNAIPPHVGIKTGLNPIFPNDLDKRQVRIPYERTEWPHVPGKKRVAVVNNFSAAGGNTTILLEEGPVQEATETDPRSTHVVAVSAKSKISLKGNIERILAYLEQHPDASLANLSYSTTARRYHHNHRVAIAASGIAQVKKQLQSALDSVDSHKPIPTTGAPPVAFTFTGQGASYKSYNLELFSSSPYFRSQILHLDAIAQGQGFASFLPVIDGSHQRDHQHSQVMTQLALVCTEIAIAKYWGSLGVKPDVVIGHSLGEYAALHIAGVLSASDTIFLVGQRAALLEKKCKVGSHNMVAVRASLAQIEASAGKYPYEIACINGPKETVLSGPTTEMDAIIPVLEGDGHKCYRLEVAFAFHSAQTDPILDGFEALANSGVLFQAPQIPVISPLLCKVIFDDKSVNARYVRRATREPVNFLSALEIARDIGIVDDETAWIEIGPHPVCVGFIKSTLSPVNVAVPSLRRGDDNYTTMAQSLAALHCAGVKVEWSEFHRPFEAALRLLDLPTYAWNDKTYWIQYIGDWALTKGNTFYDKEKGLNSAPAALPTPKSSISTSTVHQIIQESIDGEAGTVVMQSDLMQADFRAAAWGHKMNQCGVVTSSVHADIAYTLGEYLYKKLKPKSKQVHMNIANLEVLKGLIANKNPESHQLIQVSVTTSDIGSNTAELTWYNVHADGTVDEPFASATLIYGDPSEWLSSWIPMTHLVQGRIHELERLAESGVANRFNHQMAYLLFANSLVDYAAKYRGMQSVVLHELEAFADVVLSTESGGRWTVPPYFIDSVAHLAGFVLNVSDAMDTQNNFCITPGWRSMRLARPLVAGGRYRSYVKMIPTAEDPSVYLGDVYVLQDGVVVGMVGGIQFRRYPRILLSRFFSAPDDAHAPPVATSTSSKHAVATPATKGVNGVKAVKAAPAVNGTNGVKTVPAVNGTNGVKATPAVNGVKPAPPVEVEVNSDTTTAKAIQIIAAESGLDLADLTDDSSFADLGVDSLMSLVIAEKFRADLGVVVGGSLFLEYPTIGDLRSWLEEYYS</sequence>
<accession>A0A411PQP9</accession>
<organism>
    <name type="scientific">Paecilomyces divaricatus</name>
    <name type="common">Penicillium divaricatum</name>
    <dbReference type="NCBI Taxonomy" id="644132"/>
    <lineage>
        <taxon>Eukaryota</taxon>
        <taxon>Fungi</taxon>
        <taxon>Dikarya</taxon>
        <taxon>Ascomycota</taxon>
        <taxon>Pezizomycotina</taxon>
        <taxon>Eurotiomycetes</taxon>
        <taxon>Eurotiomycetidae</taxon>
        <taxon>Eurotiales</taxon>
        <taxon>Thermoascaceae</taxon>
        <taxon>Paecilomyces</taxon>
    </lineage>
</organism>
<keyword id="KW-0511">Multifunctional enzyme</keyword>
<keyword id="KW-0596">Phosphopantetheine</keyword>
<keyword id="KW-0597">Phosphoprotein</keyword>
<keyword id="KW-0808">Transferase</keyword>
<dbReference type="EC" id="2.3.1.-" evidence="7"/>
<dbReference type="EMBL" id="MH898872">
    <property type="protein sequence ID" value="QBG38888.1"/>
    <property type="molecule type" value="Genomic_DNA"/>
</dbReference>
<dbReference type="SMR" id="A0A411PQP9"/>
<dbReference type="GO" id="GO:0005737">
    <property type="term" value="C:cytoplasm"/>
    <property type="evidence" value="ECO:0007669"/>
    <property type="project" value="TreeGrafter"/>
</dbReference>
<dbReference type="GO" id="GO:0005886">
    <property type="term" value="C:plasma membrane"/>
    <property type="evidence" value="ECO:0007669"/>
    <property type="project" value="TreeGrafter"/>
</dbReference>
<dbReference type="GO" id="GO:0004315">
    <property type="term" value="F:3-oxoacyl-[acyl-carrier-protein] synthase activity"/>
    <property type="evidence" value="ECO:0007669"/>
    <property type="project" value="InterPro"/>
</dbReference>
<dbReference type="GO" id="GO:0004312">
    <property type="term" value="F:fatty acid synthase activity"/>
    <property type="evidence" value="ECO:0007669"/>
    <property type="project" value="TreeGrafter"/>
</dbReference>
<dbReference type="GO" id="GO:0031177">
    <property type="term" value="F:phosphopantetheine binding"/>
    <property type="evidence" value="ECO:0007669"/>
    <property type="project" value="InterPro"/>
</dbReference>
<dbReference type="GO" id="GO:0006633">
    <property type="term" value="P:fatty acid biosynthetic process"/>
    <property type="evidence" value="ECO:0007669"/>
    <property type="project" value="InterPro"/>
</dbReference>
<dbReference type="CDD" id="cd00833">
    <property type="entry name" value="PKS"/>
    <property type="match status" value="1"/>
</dbReference>
<dbReference type="FunFam" id="3.40.366.10:FF:000017">
    <property type="entry name" value="Non-reducing polyketide synthase aptA"/>
    <property type="match status" value="1"/>
</dbReference>
<dbReference type="FunFam" id="3.40.366.10:FF:000002">
    <property type="entry name" value="Probable polyketide synthase 2"/>
    <property type="match status" value="1"/>
</dbReference>
<dbReference type="FunFam" id="1.10.1200.10:FF:000011">
    <property type="entry name" value="Sterigmatocystin biosynthesis polyketide synthase"/>
    <property type="match status" value="1"/>
</dbReference>
<dbReference type="FunFam" id="3.10.129.110:FF:000001">
    <property type="entry name" value="Sterigmatocystin biosynthesis polyketide synthase"/>
    <property type="match status" value="1"/>
</dbReference>
<dbReference type="FunFam" id="3.40.47.10:FF:000031">
    <property type="entry name" value="Sterigmatocystin biosynthesis polyketide synthase"/>
    <property type="match status" value="1"/>
</dbReference>
<dbReference type="Gene3D" id="3.30.70.3290">
    <property type="match status" value="1"/>
</dbReference>
<dbReference type="Gene3D" id="3.40.47.10">
    <property type="match status" value="1"/>
</dbReference>
<dbReference type="Gene3D" id="1.10.1200.10">
    <property type="entry name" value="ACP-like"/>
    <property type="match status" value="1"/>
</dbReference>
<dbReference type="Gene3D" id="3.40.366.10">
    <property type="entry name" value="Malonyl-Coenzyme A Acyl Carrier Protein, domain 2"/>
    <property type="match status" value="1"/>
</dbReference>
<dbReference type="Gene3D" id="3.10.129.110">
    <property type="entry name" value="Polyketide synthase dehydratase"/>
    <property type="match status" value="1"/>
</dbReference>
<dbReference type="InterPro" id="IPR001227">
    <property type="entry name" value="Ac_transferase_dom_sf"/>
</dbReference>
<dbReference type="InterPro" id="IPR036736">
    <property type="entry name" value="ACP-like_sf"/>
</dbReference>
<dbReference type="InterPro" id="IPR014043">
    <property type="entry name" value="Acyl_transferase_dom"/>
</dbReference>
<dbReference type="InterPro" id="IPR016035">
    <property type="entry name" value="Acyl_Trfase/lysoPLipase"/>
</dbReference>
<dbReference type="InterPro" id="IPR018201">
    <property type="entry name" value="Ketoacyl_synth_AS"/>
</dbReference>
<dbReference type="InterPro" id="IPR014031">
    <property type="entry name" value="Ketoacyl_synth_C"/>
</dbReference>
<dbReference type="InterPro" id="IPR014030">
    <property type="entry name" value="Ketoacyl_synth_N"/>
</dbReference>
<dbReference type="InterPro" id="IPR016036">
    <property type="entry name" value="Malonyl_transacylase_ACP-bd"/>
</dbReference>
<dbReference type="InterPro" id="IPR020841">
    <property type="entry name" value="PKS_Beta-ketoAc_synthase_dom"/>
</dbReference>
<dbReference type="InterPro" id="IPR042104">
    <property type="entry name" value="PKS_dehydratase_sf"/>
</dbReference>
<dbReference type="InterPro" id="IPR049900">
    <property type="entry name" value="PKS_mFAS_DH"/>
</dbReference>
<dbReference type="InterPro" id="IPR050091">
    <property type="entry name" value="PKS_NRPS_Biosynth_Enz"/>
</dbReference>
<dbReference type="InterPro" id="IPR020806">
    <property type="entry name" value="PKS_PP-bd"/>
</dbReference>
<dbReference type="InterPro" id="IPR009081">
    <property type="entry name" value="PP-bd_ACP"/>
</dbReference>
<dbReference type="InterPro" id="IPR030918">
    <property type="entry name" value="PT_fungal_PKS"/>
</dbReference>
<dbReference type="InterPro" id="IPR032088">
    <property type="entry name" value="SAT"/>
</dbReference>
<dbReference type="InterPro" id="IPR016039">
    <property type="entry name" value="Thiolase-like"/>
</dbReference>
<dbReference type="NCBIfam" id="TIGR04532">
    <property type="entry name" value="PT_fungal_PKS"/>
    <property type="match status" value="1"/>
</dbReference>
<dbReference type="PANTHER" id="PTHR43775">
    <property type="entry name" value="FATTY ACID SYNTHASE"/>
    <property type="match status" value="1"/>
</dbReference>
<dbReference type="PANTHER" id="PTHR43775:SF37">
    <property type="entry name" value="SI:DKEY-61P9.11"/>
    <property type="match status" value="1"/>
</dbReference>
<dbReference type="Pfam" id="PF00698">
    <property type="entry name" value="Acyl_transf_1"/>
    <property type="match status" value="1"/>
</dbReference>
<dbReference type="Pfam" id="PF22621">
    <property type="entry name" value="CurL-like_PKS_C"/>
    <property type="match status" value="1"/>
</dbReference>
<dbReference type="Pfam" id="PF00109">
    <property type="entry name" value="ketoacyl-synt"/>
    <property type="match status" value="1"/>
</dbReference>
<dbReference type="Pfam" id="PF02801">
    <property type="entry name" value="Ketoacyl-synt_C"/>
    <property type="match status" value="1"/>
</dbReference>
<dbReference type="Pfam" id="PF00550">
    <property type="entry name" value="PP-binding"/>
    <property type="match status" value="1"/>
</dbReference>
<dbReference type="Pfam" id="PF16073">
    <property type="entry name" value="SAT"/>
    <property type="match status" value="1"/>
</dbReference>
<dbReference type="SMART" id="SM00827">
    <property type="entry name" value="PKS_AT"/>
    <property type="match status" value="1"/>
</dbReference>
<dbReference type="SMART" id="SM00825">
    <property type="entry name" value="PKS_KS"/>
    <property type="match status" value="1"/>
</dbReference>
<dbReference type="SMART" id="SM00823">
    <property type="entry name" value="PKS_PP"/>
    <property type="match status" value="1"/>
</dbReference>
<dbReference type="SUPFAM" id="SSF47336">
    <property type="entry name" value="ACP-like"/>
    <property type="match status" value="1"/>
</dbReference>
<dbReference type="SUPFAM" id="SSF52151">
    <property type="entry name" value="FabD/lysophospholipase-like"/>
    <property type="match status" value="1"/>
</dbReference>
<dbReference type="SUPFAM" id="SSF55048">
    <property type="entry name" value="Probable ACP-binding domain of malonyl-CoA ACP transacylase"/>
    <property type="match status" value="1"/>
</dbReference>
<dbReference type="SUPFAM" id="SSF53901">
    <property type="entry name" value="Thiolase-like"/>
    <property type="match status" value="1"/>
</dbReference>
<dbReference type="PROSITE" id="PS50075">
    <property type="entry name" value="CARRIER"/>
    <property type="match status" value="1"/>
</dbReference>
<dbReference type="PROSITE" id="PS00606">
    <property type="entry name" value="KS3_1"/>
    <property type="match status" value="1"/>
</dbReference>
<dbReference type="PROSITE" id="PS52004">
    <property type="entry name" value="KS3_2"/>
    <property type="match status" value="1"/>
</dbReference>
<dbReference type="PROSITE" id="PS52019">
    <property type="entry name" value="PKS_MFAS_DH"/>
    <property type="match status" value="1"/>
</dbReference>
<evidence type="ECO:0000255" key="1"/>
<evidence type="ECO:0000255" key="2">
    <source>
        <dbReference type="PROSITE-ProRule" id="PRU00258"/>
    </source>
</evidence>
<evidence type="ECO:0000255" key="3">
    <source>
        <dbReference type="PROSITE-ProRule" id="PRU01348"/>
    </source>
</evidence>
<evidence type="ECO:0000255" key="4">
    <source>
        <dbReference type="PROSITE-ProRule" id="PRU01363"/>
    </source>
</evidence>
<evidence type="ECO:0000269" key="5">
    <source>
    </source>
</evidence>
<evidence type="ECO:0000303" key="6">
    <source>
    </source>
</evidence>
<evidence type="ECO:0000305" key="7">
    <source>
    </source>
</evidence>
<feature type="chain" id="PRO_0000449011" description="Atrochrysone carboxylic acid synthase Agnpks1">
    <location>
        <begin position="1"/>
        <end position="1807"/>
    </location>
</feature>
<feature type="domain" description="Ketosynthase family 3 (KS3)" evidence="3">
    <location>
        <begin position="411"/>
        <end position="845"/>
    </location>
</feature>
<feature type="domain" description="PKS/mFAS DH" evidence="4">
    <location>
        <begin position="1338"/>
        <end position="1648"/>
    </location>
</feature>
<feature type="domain" description="Carrier" evidence="2">
    <location>
        <begin position="1732"/>
        <end position="1806"/>
    </location>
</feature>
<feature type="region of interest" description="N-terminal acylcarrier protein transacylase domain (SAT)" evidence="1">
    <location>
        <begin position="41"/>
        <end position="173"/>
    </location>
</feature>
<feature type="region of interest" description="Malonyl-CoA:ACP transacylase (MAT) domain" evidence="1">
    <location>
        <begin position="946"/>
        <end position="1265"/>
    </location>
</feature>
<feature type="region of interest" description="Product template (PT) domain" evidence="1">
    <location>
        <begin position="1334"/>
        <end position="1653"/>
    </location>
</feature>
<feature type="region of interest" description="N-terminal hotdog fold" evidence="4">
    <location>
        <begin position="1338"/>
        <end position="1473"/>
    </location>
</feature>
<feature type="region of interest" description="C-terminal hotdog fold" evidence="4">
    <location>
        <begin position="1500"/>
        <end position="1648"/>
    </location>
</feature>
<feature type="active site" description="For beta-ketoacyl synthase activity" evidence="3">
    <location>
        <position position="584"/>
    </location>
</feature>
<feature type="active site" description="For beta-ketoacyl synthase activity" evidence="3">
    <location>
        <position position="720"/>
    </location>
</feature>
<feature type="active site" description="For beta-ketoacyl synthase activity" evidence="3">
    <location>
        <position position="763"/>
    </location>
</feature>
<feature type="active site" description="Proton acceptor; for dehydratase activity" evidence="4">
    <location>
        <position position="1370"/>
    </location>
</feature>
<feature type="active site" description="Proton donor; for dehydratase activity" evidence="4">
    <location>
        <position position="1559"/>
    </location>
</feature>
<feature type="modified residue" description="O-(pantetheine 4'-phosphoryl)serine" evidence="2">
    <location>
        <position position="1766"/>
    </location>
</feature>
<gene>
    <name evidence="6" type="primary">Agnpks1</name>
</gene>
<reference key="1">
    <citation type="journal article" date="2019" name="Chem. Sci.">
        <title>Characterisation of the biosynthetic pathway to agnestins A and B reveals the reductive route to chrysophanol in fungi.</title>
        <authorList>
            <person name="Szwalbe A.J."/>
            <person name="Williams K."/>
            <person name="Song Z."/>
            <person name="de Mattos-Shipley K."/>
            <person name="Vincent J.L."/>
            <person name="Bailey A.M."/>
            <person name="Willis C.L."/>
            <person name="Cox R.J."/>
            <person name="Simpson T.J."/>
        </authorList>
    </citation>
    <scope>NUCLEOTIDE SEQUENCE [GENOMIC DNA]</scope>
    <scope>FUNCTION</scope>
    <scope>DISRUPTION PHENOTYPE</scope>
    <scope>PATHWAY</scope>
    <source>
        <strain>K5013</strain>
    </source>
</reference>
<protein>
    <recommendedName>
        <fullName evidence="6">Atrochrysone carboxylic acid synthase Agnpks1</fullName>
        <shortName evidence="6">ACAS</shortName>
        <ecNumber evidence="7">2.3.1.-</ecNumber>
    </recommendedName>
    <alternativeName>
        <fullName evidence="6">Agnestins biosynthesis cluster protein pks1</fullName>
    </alternativeName>
    <alternativeName>
        <fullName evidence="6">Non-reducing polyketide synthase Agnpks1</fullName>
    </alternativeName>
</protein>
<proteinExistence type="inferred from homology"/>
<name>AGPKS_PAEDI</name>